<proteinExistence type="evidence at protein level"/>
<dbReference type="EMBL" id="AF207839">
    <property type="protein sequence ID" value="AAF20943.1"/>
    <property type="molecule type" value="Genomic_DNA"/>
</dbReference>
<dbReference type="EMBL" id="CU329672">
    <property type="protein sequence ID" value="CAA20855.1"/>
    <property type="molecule type" value="Genomic_DNA"/>
</dbReference>
<dbReference type="PIR" id="T41262">
    <property type="entry name" value="T41262"/>
</dbReference>
<dbReference type="RefSeq" id="NP_588344.1">
    <property type="nucleotide sequence ID" value="NM_001023335.2"/>
</dbReference>
<dbReference type="SMR" id="O74502"/>
<dbReference type="BioGRID" id="275785">
    <property type="interactions" value="43"/>
</dbReference>
<dbReference type="FunCoup" id="O74502">
    <property type="interactions" value="902"/>
</dbReference>
<dbReference type="STRING" id="284812.O74502"/>
<dbReference type="iPTMnet" id="O74502"/>
<dbReference type="PaxDb" id="4896-SPCC285.16c.1"/>
<dbReference type="EnsemblFungi" id="SPCC285.16c.1">
    <property type="protein sequence ID" value="SPCC285.16c.1:pep"/>
    <property type="gene ID" value="SPCC285.16c"/>
</dbReference>
<dbReference type="GeneID" id="2539215"/>
<dbReference type="KEGG" id="spo:2539215"/>
<dbReference type="PomBase" id="SPCC285.16c">
    <property type="gene designation" value="msh6"/>
</dbReference>
<dbReference type="VEuPathDB" id="FungiDB:SPCC285.16c"/>
<dbReference type="eggNOG" id="KOG0217">
    <property type="taxonomic scope" value="Eukaryota"/>
</dbReference>
<dbReference type="HOGENOM" id="CLU_002472_1_0_1"/>
<dbReference type="InParanoid" id="O74502"/>
<dbReference type="OMA" id="TPMMAQY"/>
<dbReference type="PhylomeDB" id="O74502"/>
<dbReference type="Reactome" id="R-SPO-5358565">
    <property type="pathway name" value="Mismatch repair (MMR) directed by MSH2:MSH6 (MutSalpha)"/>
</dbReference>
<dbReference type="PRO" id="PR:O74502"/>
<dbReference type="Proteomes" id="UP000002485">
    <property type="component" value="Chromosome III"/>
</dbReference>
<dbReference type="GO" id="GO:0005829">
    <property type="term" value="C:cytosol"/>
    <property type="evidence" value="ECO:0007005"/>
    <property type="project" value="PomBase"/>
</dbReference>
<dbReference type="GO" id="GO:0032301">
    <property type="term" value="C:MutSalpha complex"/>
    <property type="evidence" value="ECO:0000318"/>
    <property type="project" value="GO_Central"/>
</dbReference>
<dbReference type="GO" id="GO:0005634">
    <property type="term" value="C:nucleus"/>
    <property type="evidence" value="ECO:0007005"/>
    <property type="project" value="PomBase"/>
</dbReference>
<dbReference type="GO" id="GO:0005524">
    <property type="term" value="F:ATP binding"/>
    <property type="evidence" value="ECO:0000266"/>
    <property type="project" value="PomBase"/>
</dbReference>
<dbReference type="GO" id="GO:0016887">
    <property type="term" value="F:ATP hydrolysis activity"/>
    <property type="evidence" value="ECO:0000305"/>
    <property type="project" value="PomBase"/>
</dbReference>
<dbReference type="GO" id="GO:0140664">
    <property type="term" value="F:ATP-dependent DNA damage sensor activity"/>
    <property type="evidence" value="ECO:0007669"/>
    <property type="project" value="InterPro"/>
</dbReference>
<dbReference type="GO" id="GO:0032137">
    <property type="term" value="F:guanine/thymine mispair binding"/>
    <property type="evidence" value="ECO:0000266"/>
    <property type="project" value="PomBase"/>
</dbReference>
<dbReference type="GO" id="GO:0030983">
    <property type="term" value="F:mismatched DNA binding"/>
    <property type="evidence" value="ECO:0000318"/>
    <property type="project" value="GO_Central"/>
</dbReference>
<dbReference type="GO" id="GO:0043570">
    <property type="term" value="P:maintenance of DNA repeat elements"/>
    <property type="evidence" value="ECO:0000315"/>
    <property type="project" value="PomBase"/>
</dbReference>
<dbReference type="GO" id="GO:0006298">
    <property type="term" value="P:mismatch repair"/>
    <property type="evidence" value="ECO:0000315"/>
    <property type="project" value="PomBase"/>
</dbReference>
<dbReference type="CDD" id="cd03286">
    <property type="entry name" value="ABC_MSH6_euk"/>
    <property type="match status" value="1"/>
</dbReference>
<dbReference type="FunFam" id="1.10.1420.10:FF:000019">
    <property type="entry name" value="DNA mismatch repair protein"/>
    <property type="match status" value="1"/>
</dbReference>
<dbReference type="FunFam" id="3.40.1170.10:FF:000002">
    <property type="entry name" value="DNA mismatch repair protein"/>
    <property type="match status" value="1"/>
</dbReference>
<dbReference type="Gene3D" id="1.10.1420.10">
    <property type="match status" value="2"/>
</dbReference>
<dbReference type="Gene3D" id="3.40.1170.10">
    <property type="entry name" value="DNA repair protein MutS, domain I"/>
    <property type="match status" value="1"/>
</dbReference>
<dbReference type="Gene3D" id="3.30.420.110">
    <property type="entry name" value="MutS, connector domain"/>
    <property type="match status" value="1"/>
</dbReference>
<dbReference type="Gene3D" id="3.40.50.300">
    <property type="entry name" value="P-loop containing nucleotide triphosphate hydrolases"/>
    <property type="match status" value="1"/>
</dbReference>
<dbReference type="InterPro" id="IPR007695">
    <property type="entry name" value="DNA_mismatch_repair_MutS-lik_N"/>
</dbReference>
<dbReference type="InterPro" id="IPR017261">
    <property type="entry name" value="DNA_mismatch_repair_MutS/MSH"/>
</dbReference>
<dbReference type="InterPro" id="IPR000432">
    <property type="entry name" value="DNA_mismatch_repair_MutS_C"/>
</dbReference>
<dbReference type="InterPro" id="IPR007861">
    <property type="entry name" value="DNA_mismatch_repair_MutS_clamp"/>
</dbReference>
<dbReference type="InterPro" id="IPR007696">
    <property type="entry name" value="DNA_mismatch_repair_MutS_core"/>
</dbReference>
<dbReference type="InterPro" id="IPR016151">
    <property type="entry name" value="DNA_mismatch_repair_MutS_N"/>
</dbReference>
<dbReference type="InterPro" id="IPR036187">
    <property type="entry name" value="DNA_mismatch_repair_MutS_sf"/>
</dbReference>
<dbReference type="InterPro" id="IPR007860">
    <property type="entry name" value="DNA_mmatch_repair_MutS_con_dom"/>
</dbReference>
<dbReference type="InterPro" id="IPR045076">
    <property type="entry name" value="MutS"/>
</dbReference>
<dbReference type="InterPro" id="IPR036678">
    <property type="entry name" value="MutS_con_dom_sf"/>
</dbReference>
<dbReference type="InterPro" id="IPR027417">
    <property type="entry name" value="P-loop_NTPase"/>
</dbReference>
<dbReference type="NCBIfam" id="NF003810">
    <property type="entry name" value="PRK05399.1"/>
    <property type="match status" value="1"/>
</dbReference>
<dbReference type="PANTHER" id="PTHR11361:SF148">
    <property type="entry name" value="DNA MISMATCH REPAIR PROTEIN MSH6"/>
    <property type="match status" value="1"/>
</dbReference>
<dbReference type="PANTHER" id="PTHR11361">
    <property type="entry name" value="DNA MISMATCH REPAIR PROTEIN MUTS FAMILY MEMBER"/>
    <property type="match status" value="1"/>
</dbReference>
<dbReference type="Pfam" id="PF01624">
    <property type="entry name" value="MutS_I"/>
    <property type="match status" value="1"/>
</dbReference>
<dbReference type="Pfam" id="PF05188">
    <property type="entry name" value="MutS_II"/>
    <property type="match status" value="1"/>
</dbReference>
<dbReference type="Pfam" id="PF05192">
    <property type="entry name" value="MutS_III"/>
    <property type="match status" value="1"/>
</dbReference>
<dbReference type="Pfam" id="PF05190">
    <property type="entry name" value="MutS_IV"/>
    <property type="match status" value="1"/>
</dbReference>
<dbReference type="Pfam" id="PF00488">
    <property type="entry name" value="MutS_V"/>
    <property type="match status" value="1"/>
</dbReference>
<dbReference type="PIRSF" id="PIRSF037677">
    <property type="entry name" value="DNA_mis_repair_Msh6"/>
    <property type="match status" value="1"/>
</dbReference>
<dbReference type="SMART" id="SM00534">
    <property type="entry name" value="MUTSac"/>
    <property type="match status" value="1"/>
</dbReference>
<dbReference type="SMART" id="SM00533">
    <property type="entry name" value="MUTSd"/>
    <property type="match status" value="1"/>
</dbReference>
<dbReference type="SUPFAM" id="SSF55271">
    <property type="entry name" value="DNA repair protein MutS, domain I"/>
    <property type="match status" value="1"/>
</dbReference>
<dbReference type="SUPFAM" id="SSF53150">
    <property type="entry name" value="DNA repair protein MutS, domain II"/>
    <property type="match status" value="1"/>
</dbReference>
<dbReference type="SUPFAM" id="SSF48334">
    <property type="entry name" value="DNA repair protein MutS, domain III"/>
    <property type="match status" value="1"/>
</dbReference>
<dbReference type="SUPFAM" id="SSF52540">
    <property type="entry name" value="P-loop containing nucleoside triphosphate hydrolases"/>
    <property type="match status" value="1"/>
</dbReference>
<dbReference type="PROSITE" id="PS00486">
    <property type="entry name" value="DNA_MISMATCH_REPAIR_2"/>
    <property type="match status" value="1"/>
</dbReference>
<feature type="chain" id="PRO_0000115212" description="DNA mismatch repair protein msh6">
    <location>
        <begin position="1"/>
        <end position="1254"/>
    </location>
</feature>
<feature type="region of interest" description="Disordered" evidence="3">
    <location>
        <begin position="1"/>
        <end position="324"/>
    </location>
</feature>
<feature type="compositionally biased region" description="Basic and acidic residues" evidence="3">
    <location>
        <begin position="8"/>
        <end position="18"/>
    </location>
</feature>
<feature type="compositionally biased region" description="Low complexity" evidence="3">
    <location>
        <begin position="62"/>
        <end position="72"/>
    </location>
</feature>
<feature type="compositionally biased region" description="Polar residues" evidence="3">
    <location>
        <begin position="79"/>
        <end position="90"/>
    </location>
</feature>
<feature type="compositionally biased region" description="Low complexity" evidence="3">
    <location>
        <begin position="102"/>
        <end position="114"/>
    </location>
</feature>
<feature type="compositionally biased region" description="Acidic residues" evidence="3">
    <location>
        <begin position="204"/>
        <end position="213"/>
    </location>
</feature>
<feature type="compositionally biased region" description="Acidic residues" evidence="3">
    <location>
        <begin position="251"/>
        <end position="262"/>
    </location>
</feature>
<feature type="compositionally biased region" description="Low complexity" evidence="3">
    <location>
        <begin position="295"/>
        <end position="313"/>
    </location>
</feature>
<feature type="binding site" evidence="2">
    <location>
        <begin position="1024"/>
        <end position="1031"/>
    </location>
    <ligand>
        <name>ATP</name>
        <dbReference type="ChEBI" id="CHEBI:30616"/>
    </ligand>
</feature>
<feature type="modified residue" description="Phosphoserine" evidence="4">
    <location>
        <position position="205"/>
    </location>
</feature>
<feature type="modified residue" description="Phosphoserine" evidence="4">
    <location>
        <position position="299"/>
    </location>
</feature>
<feature type="modified residue" description="Phosphoserine" evidence="4">
    <location>
        <position position="307"/>
    </location>
</feature>
<feature type="modified residue" description="Phosphoserine" evidence="4">
    <location>
        <position position="309"/>
    </location>
</feature>
<accession>O74502</accession>
<evidence type="ECO:0000250" key="1"/>
<evidence type="ECO:0000255" key="2"/>
<evidence type="ECO:0000256" key="3">
    <source>
        <dbReference type="SAM" id="MobiDB-lite"/>
    </source>
</evidence>
<evidence type="ECO:0000269" key="4">
    <source>
    </source>
</evidence>
<evidence type="ECO:0000305" key="5"/>
<comment type="function">
    <text>Involved in post-replicative DNA-mismatch repair. Has a role towards base-base mispairs and insertion-deletion loops.</text>
</comment>
<comment type="subunit">
    <text evidence="1">Heterodimer of msh2 and msh6.</text>
</comment>
<comment type="subcellular location">
    <subcellularLocation>
        <location evidence="5">Nucleus</location>
    </subcellularLocation>
</comment>
<comment type="similarity">
    <text evidence="5">Belongs to the DNA mismatch repair MutS family.</text>
</comment>
<gene>
    <name type="primary">msh6</name>
    <name type="ORF">SPCC285.16c</name>
</gene>
<reference evidence="5" key="1">
    <citation type="submission" date="1999-11" db="EMBL/GenBank/DDBJ databases">
        <title>Major role of msh6 in the mismatch repair system of S. pombe both towards base-base mispairs and insertion-deletion loops, contrasting with minor role of the msh3 ortholog swi4.</title>
        <authorList>
            <person name="Tornier C."/>
            <person name="Bessone S."/>
            <person name="Varlet I."/>
            <person name="Rudolph C."/>
            <person name="Darmon M."/>
            <person name="Fleck O."/>
        </authorList>
    </citation>
    <scope>NUCLEOTIDE SEQUENCE [GENOMIC DNA]</scope>
</reference>
<reference key="2">
    <citation type="journal article" date="2002" name="Nature">
        <title>The genome sequence of Schizosaccharomyces pombe.</title>
        <authorList>
            <person name="Wood V."/>
            <person name="Gwilliam R."/>
            <person name="Rajandream M.A."/>
            <person name="Lyne M.H."/>
            <person name="Lyne R."/>
            <person name="Stewart A."/>
            <person name="Sgouros J.G."/>
            <person name="Peat N."/>
            <person name="Hayles J."/>
            <person name="Baker S.G."/>
            <person name="Basham D."/>
            <person name="Bowman S."/>
            <person name="Brooks K."/>
            <person name="Brown D."/>
            <person name="Brown S."/>
            <person name="Chillingworth T."/>
            <person name="Churcher C.M."/>
            <person name="Collins M."/>
            <person name="Connor R."/>
            <person name="Cronin A."/>
            <person name="Davis P."/>
            <person name="Feltwell T."/>
            <person name="Fraser A."/>
            <person name="Gentles S."/>
            <person name="Goble A."/>
            <person name="Hamlin N."/>
            <person name="Harris D.E."/>
            <person name="Hidalgo J."/>
            <person name="Hodgson G."/>
            <person name="Holroyd S."/>
            <person name="Hornsby T."/>
            <person name="Howarth S."/>
            <person name="Huckle E.J."/>
            <person name="Hunt S."/>
            <person name="Jagels K."/>
            <person name="James K.D."/>
            <person name="Jones L."/>
            <person name="Jones M."/>
            <person name="Leather S."/>
            <person name="McDonald S."/>
            <person name="McLean J."/>
            <person name="Mooney P."/>
            <person name="Moule S."/>
            <person name="Mungall K.L."/>
            <person name="Murphy L.D."/>
            <person name="Niblett D."/>
            <person name="Odell C."/>
            <person name="Oliver K."/>
            <person name="O'Neil S."/>
            <person name="Pearson D."/>
            <person name="Quail M.A."/>
            <person name="Rabbinowitsch E."/>
            <person name="Rutherford K.M."/>
            <person name="Rutter S."/>
            <person name="Saunders D."/>
            <person name="Seeger K."/>
            <person name="Sharp S."/>
            <person name="Skelton J."/>
            <person name="Simmonds M.N."/>
            <person name="Squares R."/>
            <person name="Squares S."/>
            <person name="Stevens K."/>
            <person name="Taylor K."/>
            <person name="Taylor R.G."/>
            <person name="Tivey A."/>
            <person name="Walsh S.V."/>
            <person name="Warren T."/>
            <person name="Whitehead S."/>
            <person name="Woodward J.R."/>
            <person name="Volckaert G."/>
            <person name="Aert R."/>
            <person name="Robben J."/>
            <person name="Grymonprez B."/>
            <person name="Weltjens I."/>
            <person name="Vanstreels E."/>
            <person name="Rieger M."/>
            <person name="Schaefer M."/>
            <person name="Mueller-Auer S."/>
            <person name="Gabel C."/>
            <person name="Fuchs M."/>
            <person name="Duesterhoeft A."/>
            <person name="Fritzc C."/>
            <person name="Holzer E."/>
            <person name="Moestl D."/>
            <person name="Hilbert H."/>
            <person name="Borzym K."/>
            <person name="Langer I."/>
            <person name="Beck A."/>
            <person name="Lehrach H."/>
            <person name="Reinhardt R."/>
            <person name="Pohl T.M."/>
            <person name="Eger P."/>
            <person name="Zimmermann W."/>
            <person name="Wedler H."/>
            <person name="Wambutt R."/>
            <person name="Purnelle B."/>
            <person name="Goffeau A."/>
            <person name="Cadieu E."/>
            <person name="Dreano S."/>
            <person name="Gloux S."/>
            <person name="Lelaure V."/>
            <person name="Mottier S."/>
            <person name="Galibert F."/>
            <person name="Aves S.J."/>
            <person name="Xiang Z."/>
            <person name="Hunt C."/>
            <person name="Moore K."/>
            <person name="Hurst S.M."/>
            <person name="Lucas M."/>
            <person name="Rochet M."/>
            <person name="Gaillardin C."/>
            <person name="Tallada V.A."/>
            <person name="Garzon A."/>
            <person name="Thode G."/>
            <person name="Daga R.R."/>
            <person name="Cruzado L."/>
            <person name="Jimenez J."/>
            <person name="Sanchez M."/>
            <person name="del Rey F."/>
            <person name="Benito J."/>
            <person name="Dominguez A."/>
            <person name="Revuelta J.L."/>
            <person name="Moreno S."/>
            <person name="Armstrong J."/>
            <person name="Forsburg S.L."/>
            <person name="Cerutti L."/>
            <person name="Lowe T."/>
            <person name="McCombie W.R."/>
            <person name="Paulsen I."/>
            <person name="Potashkin J."/>
            <person name="Shpakovski G.V."/>
            <person name="Ussery D."/>
            <person name="Barrell B.G."/>
            <person name="Nurse P."/>
        </authorList>
    </citation>
    <scope>NUCLEOTIDE SEQUENCE [LARGE SCALE GENOMIC DNA]</scope>
    <source>
        <strain>972 / ATCC 24843</strain>
    </source>
</reference>
<reference key="3">
    <citation type="journal article" date="2008" name="J. Proteome Res.">
        <title>Phosphoproteome analysis of fission yeast.</title>
        <authorList>
            <person name="Wilson-Grady J.T."/>
            <person name="Villen J."/>
            <person name="Gygi S.P."/>
        </authorList>
    </citation>
    <scope>PHOSPHORYLATION [LARGE SCALE ANALYSIS] AT SER-205; SER-299; SER-307 AND SER-309</scope>
    <scope>IDENTIFICATION BY MASS SPECTROMETRY</scope>
</reference>
<sequence length="1254" mass="141512">MSVGNVGKQREKTKDSSAKTKQKTLFGFFSKIPNVKQEKSDSTLSSSSNHDSNHDTPADVDNSSNVNKNSSSPERELPTSPSHHANTEIDSSSSMLPPPSSDPFSSPLSSSLHRSSPKRPHDSLGEESPGKLLRTSVKQEPDSEEEIDSPTKKKSFKSLDTSIFQAEDQFRHPVSSKLENSELSEVDKPFIASRRSRKPVSYAESDEDEDFDDAPTKGSRHKRIVSDDESDDYVEPDHISEASSEASLPIDEVESMDEDVDGYSDHSVSVAAPIPKKESRKESSNSLYESYRLGSQIASPSPSVSGSASPTKSNKNGVLNREEKRRQRMEAFKKENNERYEWLLDVRDADQNRVGDPNYDPRTLYIPPSAWATFKPFEKQFWKIKKDLMDTVVFFQKGKFYELYENDAAIGHQVFSLKLTDRVNMKMVGIPEASFDYWASQFIAKGYRIARVDQLETALGKEIKDRQRTQKEEKVVQRGLTQVLTSGTLVDEAMLTSDLSTYCMAIKESLQSDNEEPSFGICFIDTSTGGFHMCEFTDDIHRTKLDTLLTQVRPKELILEKSKISQKSIRAIKYCVSSSSIWNFIKPYTEFWDNERVEREIIAGDYFKNGLEGAPKILKSYLSEKPLAISAFGALFWYLRQLKLDKDMCSMGNFDEYDASQQSTSLLMNGQTLKNLEIFSNSFDGGSEGTLFHLLCRCVTPFGKRLFHTWLCHPLRSGTAINARLDVVELIADNPVIRDTIWGFLHKLPDLERLISRVHAGRSKPADFVRVLEGFQRINSAFDQLREEFMEVAEGTLLGEIIQSAPNMKEELEAWTRAFNWQKASEEGVFEPEIGFEAEYDTSQKYQSELKNELYALLEQYKKQLRCSSLNFKNIGKEVYQVEVPSDVKVPVNWCKMSGTKKTNRYYNDELRKKIKKLLEAEELHLAIMSRMQEKFYIRFDSNYEQWLALIKYTASIDCFFSLSQAAAALGEPYCRPEIIEQKDGHLYFEELRHPCINASAASTFVPNDVVLGGESPNMIVLTGPNMAGKSTLLRQVCIAVIMAQLGCWVPAKRASITPMTSIYTRLGANDDIMSARSTFMVELSETKKILDECGPKSLVILDELGRGTSTYDGHAIAYAVLHHLVSNIGCLGFFSTHYQSLCVDFMHHRQVRLMQMAAAVDEKIRRVTFLYKLEDGICPKSYGMNVASMAGLPEKVIDAAEEKASELEQASASFINASDDIALMSDFLQVLRISKSIEPLTAVNIPLILDSFE</sequence>
<protein>
    <recommendedName>
        <fullName>DNA mismatch repair protein msh6</fullName>
    </recommendedName>
</protein>
<name>MSH6_SCHPO</name>
<keyword id="KW-0067">ATP-binding</keyword>
<keyword id="KW-0227">DNA damage</keyword>
<keyword id="KW-0234">DNA repair</keyword>
<keyword id="KW-0238">DNA-binding</keyword>
<keyword id="KW-0547">Nucleotide-binding</keyword>
<keyword id="KW-0539">Nucleus</keyword>
<keyword id="KW-0597">Phosphoprotein</keyword>
<keyword id="KW-1185">Reference proteome</keyword>
<organism>
    <name type="scientific">Schizosaccharomyces pombe (strain 972 / ATCC 24843)</name>
    <name type="common">Fission yeast</name>
    <dbReference type="NCBI Taxonomy" id="284812"/>
    <lineage>
        <taxon>Eukaryota</taxon>
        <taxon>Fungi</taxon>
        <taxon>Dikarya</taxon>
        <taxon>Ascomycota</taxon>
        <taxon>Taphrinomycotina</taxon>
        <taxon>Schizosaccharomycetes</taxon>
        <taxon>Schizosaccharomycetales</taxon>
        <taxon>Schizosaccharomycetaceae</taxon>
        <taxon>Schizosaccharomyces</taxon>
    </lineage>
</organism>